<comment type="subunit">
    <text evidence="1">Part of the 50S ribosomal subunit.</text>
</comment>
<comment type="similarity">
    <text evidence="1">Belongs to the bacterial ribosomal protein bL31 family. Type B subfamily.</text>
</comment>
<keyword id="KW-1185">Reference proteome</keyword>
<keyword id="KW-0687">Ribonucleoprotein</keyword>
<keyword id="KW-0689">Ribosomal protein</keyword>
<accession>Q7VYS7</accession>
<dbReference type="EMBL" id="BX640414">
    <property type="protein sequence ID" value="CAE41528.1"/>
    <property type="molecule type" value="Genomic_DNA"/>
</dbReference>
<dbReference type="RefSeq" id="NP_880004.1">
    <property type="nucleotide sequence ID" value="NC_002929.2"/>
</dbReference>
<dbReference type="RefSeq" id="WP_003818624.1">
    <property type="nucleotide sequence ID" value="NZ_CP039022.1"/>
</dbReference>
<dbReference type="SMR" id="Q7VYS7"/>
<dbReference type="STRING" id="257313.BP1232"/>
<dbReference type="PaxDb" id="257313-BP1232"/>
<dbReference type="KEGG" id="bpe:BP1232"/>
<dbReference type="PATRIC" id="fig|257313.5.peg.1328"/>
<dbReference type="eggNOG" id="COG0254">
    <property type="taxonomic scope" value="Bacteria"/>
</dbReference>
<dbReference type="HOGENOM" id="CLU_114306_2_1_4"/>
<dbReference type="Proteomes" id="UP000002676">
    <property type="component" value="Chromosome"/>
</dbReference>
<dbReference type="GO" id="GO:1990904">
    <property type="term" value="C:ribonucleoprotein complex"/>
    <property type="evidence" value="ECO:0007669"/>
    <property type="project" value="UniProtKB-KW"/>
</dbReference>
<dbReference type="GO" id="GO:0005840">
    <property type="term" value="C:ribosome"/>
    <property type="evidence" value="ECO:0007669"/>
    <property type="project" value="UniProtKB-KW"/>
</dbReference>
<dbReference type="GO" id="GO:0003735">
    <property type="term" value="F:structural constituent of ribosome"/>
    <property type="evidence" value="ECO:0007669"/>
    <property type="project" value="InterPro"/>
</dbReference>
<dbReference type="GO" id="GO:0006412">
    <property type="term" value="P:translation"/>
    <property type="evidence" value="ECO:0007669"/>
    <property type="project" value="UniProtKB-UniRule"/>
</dbReference>
<dbReference type="Gene3D" id="4.10.830.30">
    <property type="entry name" value="Ribosomal protein L31"/>
    <property type="match status" value="1"/>
</dbReference>
<dbReference type="HAMAP" id="MF_00502">
    <property type="entry name" value="Ribosomal_bL31_2"/>
    <property type="match status" value="1"/>
</dbReference>
<dbReference type="InterPro" id="IPR034704">
    <property type="entry name" value="Ribosomal_bL28/bL31-like_sf"/>
</dbReference>
<dbReference type="InterPro" id="IPR002150">
    <property type="entry name" value="Ribosomal_bL31"/>
</dbReference>
<dbReference type="InterPro" id="IPR027493">
    <property type="entry name" value="Ribosomal_bL31_B"/>
</dbReference>
<dbReference type="InterPro" id="IPR042105">
    <property type="entry name" value="Ribosomal_bL31_sf"/>
</dbReference>
<dbReference type="NCBIfam" id="TIGR00105">
    <property type="entry name" value="L31"/>
    <property type="match status" value="1"/>
</dbReference>
<dbReference type="NCBIfam" id="NF002462">
    <property type="entry name" value="PRK01678.1"/>
    <property type="match status" value="1"/>
</dbReference>
<dbReference type="PANTHER" id="PTHR33280">
    <property type="entry name" value="50S RIBOSOMAL PROTEIN L31, CHLOROPLASTIC"/>
    <property type="match status" value="1"/>
</dbReference>
<dbReference type="PANTHER" id="PTHR33280:SF1">
    <property type="entry name" value="LARGE RIBOSOMAL SUBUNIT PROTEIN BL31C"/>
    <property type="match status" value="1"/>
</dbReference>
<dbReference type="Pfam" id="PF01197">
    <property type="entry name" value="Ribosomal_L31"/>
    <property type="match status" value="1"/>
</dbReference>
<dbReference type="PRINTS" id="PR01249">
    <property type="entry name" value="RIBOSOMALL31"/>
</dbReference>
<dbReference type="SUPFAM" id="SSF143800">
    <property type="entry name" value="L28p-like"/>
    <property type="match status" value="1"/>
</dbReference>
<dbReference type="PROSITE" id="PS01143">
    <property type="entry name" value="RIBOSOMAL_L31"/>
    <property type="match status" value="1"/>
</dbReference>
<sequence length="88" mass="10030">MKEGIHPEYREVVFMDVQTGNKFVTRSTIHTRETVEIDGKTYPLFKCDVTSESHPFYTGAQTRIVETGRVEKFRARFARTAGTVKSAS</sequence>
<gene>
    <name evidence="1" type="primary">rpmE2</name>
    <name type="ordered locus">BP1232</name>
</gene>
<proteinExistence type="inferred from homology"/>
<feature type="chain" id="PRO_0000173211" description="Large ribosomal subunit protein bL31B">
    <location>
        <begin position="1"/>
        <end position="88"/>
    </location>
</feature>
<reference key="1">
    <citation type="journal article" date="2003" name="Nat. Genet.">
        <title>Comparative analysis of the genome sequences of Bordetella pertussis, Bordetella parapertussis and Bordetella bronchiseptica.</title>
        <authorList>
            <person name="Parkhill J."/>
            <person name="Sebaihia M."/>
            <person name="Preston A."/>
            <person name="Murphy L.D."/>
            <person name="Thomson N.R."/>
            <person name="Harris D.E."/>
            <person name="Holden M.T.G."/>
            <person name="Churcher C.M."/>
            <person name="Bentley S.D."/>
            <person name="Mungall K.L."/>
            <person name="Cerdeno-Tarraga A.-M."/>
            <person name="Temple L."/>
            <person name="James K.D."/>
            <person name="Harris B."/>
            <person name="Quail M.A."/>
            <person name="Achtman M."/>
            <person name="Atkin R."/>
            <person name="Baker S."/>
            <person name="Basham D."/>
            <person name="Bason N."/>
            <person name="Cherevach I."/>
            <person name="Chillingworth T."/>
            <person name="Collins M."/>
            <person name="Cronin A."/>
            <person name="Davis P."/>
            <person name="Doggett J."/>
            <person name="Feltwell T."/>
            <person name="Goble A."/>
            <person name="Hamlin N."/>
            <person name="Hauser H."/>
            <person name="Holroyd S."/>
            <person name="Jagels K."/>
            <person name="Leather S."/>
            <person name="Moule S."/>
            <person name="Norberczak H."/>
            <person name="O'Neil S."/>
            <person name="Ormond D."/>
            <person name="Price C."/>
            <person name="Rabbinowitsch E."/>
            <person name="Rutter S."/>
            <person name="Sanders M."/>
            <person name="Saunders D."/>
            <person name="Seeger K."/>
            <person name="Sharp S."/>
            <person name="Simmonds M."/>
            <person name="Skelton J."/>
            <person name="Squares R."/>
            <person name="Squares S."/>
            <person name="Stevens K."/>
            <person name="Unwin L."/>
            <person name="Whitehead S."/>
            <person name="Barrell B.G."/>
            <person name="Maskell D.J."/>
        </authorList>
    </citation>
    <scope>NUCLEOTIDE SEQUENCE [LARGE SCALE GENOMIC DNA]</scope>
    <source>
        <strain>Tohama I / ATCC BAA-589 / NCTC 13251</strain>
    </source>
</reference>
<organism>
    <name type="scientific">Bordetella pertussis (strain Tohama I / ATCC BAA-589 / NCTC 13251)</name>
    <dbReference type="NCBI Taxonomy" id="257313"/>
    <lineage>
        <taxon>Bacteria</taxon>
        <taxon>Pseudomonadati</taxon>
        <taxon>Pseudomonadota</taxon>
        <taxon>Betaproteobacteria</taxon>
        <taxon>Burkholderiales</taxon>
        <taxon>Alcaligenaceae</taxon>
        <taxon>Bordetella</taxon>
    </lineage>
</organism>
<evidence type="ECO:0000255" key="1">
    <source>
        <dbReference type="HAMAP-Rule" id="MF_00502"/>
    </source>
</evidence>
<evidence type="ECO:0000305" key="2"/>
<name>RL31B_BORPE</name>
<protein>
    <recommendedName>
        <fullName evidence="1">Large ribosomal subunit protein bL31B</fullName>
    </recommendedName>
    <alternativeName>
        <fullName evidence="2">50S ribosomal protein L31 type B</fullName>
    </alternativeName>
</protein>